<name>SYE_HALH5</name>
<protein>
    <recommendedName>
        <fullName evidence="1">Glutamate--tRNA ligase</fullName>
        <ecNumber evidence="1">6.1.1.17</ecNumber>
    </recommendedName>
    <alternativeName>
        <fullName evidence="1">Glutamyl-tRNA synthetase</fullName>
        <shortName evidence="1">GluRS</shortName>
    </alternativeName>
</protein>
<proteinExistence type="inferred from homology"/>
<sequence>MASEVRVRFAPSPTGHLHIGGARSALFNYLFAKNQGGMFVLRIEDTDQARNVGQAKEKLLDSLKWLGVEWDESIDVGGEYGPYSSMERLDIYKKHIEQLLNEGKAYYCYMTEEELEAEREAQIARGEMPKYSGRDRDLTEEQRRAYEAKGIKPVVRFRVPEGQVIKIQDAVRGEVSFESDGIGDFVIARKDGVPMYNFAVVVDDHLMKISHVIRGEEHLSNTPRQVMLYEAFGWDVPTFAHASLILNPNRQKMSKRDESIIQFVEQYKELGYMPEAIVNFLALLGWSPVGEEEIFSLEELAAQFSLERVSKAPAVFDTDKLAWMNNQYIKNADLDDVVALALPHLQKAGKLPESLSEEQAEWAKAVISLYQEQLHYGAEIVELTELFFKTEIQYNDEAQEVLNEEQVPGVLSGFLQELEGLDTWDAVSIKGAIKATQKATGQKGKKLFMPIRVATTGQTHGPELPSAIKLIGKEIVTHRLRSLLN</sequence>
<comment type="function">
    <text evidence="1">Catalyzes the attachment of glutamate to tRNA(Glu) in a two-step reaction: glutamate is first activated by ATP to form Glu-AMP and then transferred to the acceptor end of tRNA(Glu).</text>
</comment>
<comment type="catalytic activity">
    <reaction evidence="1">
        <text>tRNA(Glu) + L-glutamate + ATP = L-glutamyl-tRNA(Glu) + AMP + diphosphate</text>
        <dbReference type="Rhea" id="RHEA:23540"/>
        <dbReference type="Rhea" id="RHEA-COMP:9663"/>
        <dbReference type="Rhea" id="RHEA-COMP:9680"/>
        <dbReference type="ChEBI" id="CHEBI:29985"/>
        <dbReference type="ChEBI" id="CHEBI:30616"/>
        <dbReference type="ChEBI" id="CHEBI:33019"/>
        <dbReference type="ChEBI" id="CHEBI:78442"/>
        <dbReference type="ChEBI" id="CHEBI:78520"/>
        <dbReference type="ChEBI" id="CHEBI:456215"/>
        <dbReference type="EC" id="6.1.1.17"/>
    </reaction>
</comment>
<comment type="subunit">
    <text evidence="1">Monomer.</text>
</comment>
<comment type="subcellular location">
    <subcellularLocation>
        <location evidence="1">Cytoplasm</location>
    </subcellularLocation>
</comment>
<comment type="similarity">
    <text evidence="1">Belongs to the class-I aminoacyl-tRNA synthetase family. Glutamate--tRNA ligase type 1 subfamily.</text>
</comment>
<keyword id="KW-0030">Aminoacyl-tRNA synthetase</keyword>
<keyword id="KW-0067">ATP-binding</keyword>
<keyword id="KW-0963">Cytoplasm</keyword>
<keyword id="KW-0436">Ligase</keyword>
<keyword id="KW-0547">Nucleotide-binding</keyword>
<keyword id="KW-0648">Protein biosynthesis</keyword>
<keyword id="KW-1185">Reference proteome</keyword>
<dbReference type="EC" id="6.1.1.17" evidence="1"/>
<dbReference type="EMBL" id="BA000004">
    <property type="protein sequence ID" value="BAB03828.1"/>
    <property type="molecule type" value="Genomic_DNA"/>
</dbReference>
<dbReference type="PIR" id="E83663">
    <property type="entry name" value="E83663"/>
</dbReference>
<dbReference type="RefSeq" id="WP_010896292.1">
    <property type="nucleotide sequence ID" value="NC_002570.2"/>
</dbReference>
<dbReference type="SMR" id="Q9KGF6"/>
<dbReference type="STRING" id="272558.gene:10725949"/>
<dbReference type="KEGG" id="bha:BH0109"/>
<dbReference type="eggNOG" id="COG0008">
    <property type="taxonomic scope" value="Bacteria"/>
</dbReference>
<dbReference type="HOGENOM" id="CLU_015768_6_1_9"/>
<dbReference type="OrthoDB" id="9807503at2"/>
<dbReference type="Proteomes" id="UP000001258">
    <property type="component" value="Chromosome"/>
</dbReference>
<dbReference type="GO" id="GO:0005829">
    <property type="term" value="C:cytosol"/>
    <property type="evidence" value="ECO:0007669"/>
    <property type="project" value="TreeGrafter"/>
</dbReference>
<dbReference type="GO" id="GO:0005524">
    <property type="term" value="F:ATP binding"/>
    <property type="evidence" value="ECO:0007669"/>
    <property type="project" value="UniProtKB-UniRule"/>
</dbReference>
<dbReference type="GO" id="GO:0004818">
    <property type="term" value="F:glutamate-tRNA ligase activity"/>
    <property type="evidence" value="ECO:0007669"/>
    <property type="project" value="UniProtKB-UniRule"/>
</dbReference>
<dbReference type="GO" id="GO:0000049">
    <property type="term" value="F:tRNA binding"/>
    <property type="evidence" value="ECO:0007669"/>
    <property type="project" value="InterPro"/>
</dbReference>
<dbReference type="GO" id="GO:0008270">
    <property type="term" value="F:zinc ion binding"/>
    <property type="evidence" value="ECO:0007669"/>
    <property type="project" value="InterPro"/>
</dbReference>
<dbReference type="GO" id="GO:0006424">
    <property type="term" value="P:glutamyl-tRNA aminoacylation"/>
    <property type="evidence" value="ECO:0007669"/>
    <property type="project" value="UniProtKB-UniRule"/>
</dbReference>
<dbReference type="CDD" id="cd00808">
    <property type="entry name" value="GluRS_core"/>
    <property type="match status" value="1"/>
</dbReference>
<dbReference type="FunFam" id="1.10.10.350:FF:000002">
    <property type="entry name" value="Glutamate--tRNA ligase"/>
    <property type="match status" value="1"/>
</dbReference>
<dbReference type="FunFam" id="3.40.50.620:FF:000007">
    <property type="entry name" value="Glutamate--tRNA ligase"/>
    <property type="match status" value="1"/>
</dbReference>
<dbReference type="Gene3D" id="1.10.10.350">
    <property type="match status" value="1"/>
</dbReference>
<dbReference type="Gene3D" id="3.40.50.620">
    <property type="entry name" value="HUPs"/>
    <property type="match status" value="1"/>
</dbReference>
<dbReference type="HAMAP" id="MF_00022">
    <property type="entry name" value="Glu_tRNA_synth_type1"/>
    <property type="match status" value="1"/>
</dbReference>
<dbReference type="InterPro" id="IPR045462">
    <property type="entry name" value="aa-tRNA-synth_I_cd-bd"/>
</dbReference>
<dbReference type="InterPro" id="IPR020751">
    <property type="entry name" value="aa-tRNA-synth_I_codon-bd_sub2"/>
</dbReference>
<dbReference type="InterPro" id="IPR001412">
    <property type="entry name" value="aa-tRNA-synth_I_CS"/>
</dbReference>
<dbReference type="InterPro" id="IPR008925">
    <property type="entry name" value="aa_tRNA-synth_I_cd-bd_sf"/>
</dbReference>
<dbReference type="InterPro" id="IPR004527">
    <property type="entry name" value="Glu-tRNA-ligase_bac/mito"/>
</dbReference>
<dbReference type="InterPro" id="IPR000924">
    <property type="entry name" value="Glu/Gln-tRNA-synth"/>
</dbReference>
<dbReference type="InterPro" id="IPR020058">
    <property type="entry name" value="Glu/Gln-tRNA-synth_Ib_cat-dom"/>
</dbReference>
<dbReference type="InterPro" id="IPR049940">
    <property type="entry name" value="GluQ/Sye"/>
</dbReference>
<dbReference type="InterPro" id="IPR033910">
    <property type="entry name" value="GluRS_core"/>
</dbReference>
<dbReference type="InterPro" id="IPR014729">
    <property type="entry name" value="Rossmann-like_a/b/a_fold"/>
</dbReference>
<dbReference type="NCBIfam" id="TIGR00464">
    <property type="entry name" value="gltX_bact"/>
    <property type="match status" value="1"/>
</dbReference>
<dbReference type="PANTHER" id="PTHR43311">
    <property type="entry name" value="GLUTAMATE--TRNA LIGASE"/>
    <property type="match status" value="1"/>
</dbReference>
<dbReference type="PANTHER" id="PTHR43311:SF2">
    <property type="entry name" value="GLUTAMATE--TRNA LIGASE, MITOCHONDRIAL-RELATED"/>
    <property type="match status" value="1"/>
</dbReference>
<dbReference type="Pfam" id="PF19269">
    <property type="entry name" value="Anticodon_2"/>
    <property type="match status" value="1"/>
</dbReference>
<dbReference type="Pfam" id="PF00749">
    <property type="entry name" value="tRNA-synt_1c"/>
    <property type="match status" value="1"/>
</dbReference>
<dbReference type="PRINTS" id="PR00987">
    <property type="entry name" value="TRNASYNTHGLU"/>
</dbReference>
<dbReference type="SUPFAM" id="SSF48163">
    <property type="entry name" value="An anticodon-binding domain of class I aminoacyl-tRNA synthetases"/>
    <property type="match status" value="1"/>
</dbReference>
<dbReference type="SUPFAM" id="SSF52374">
    <property type="entry name" value="Nucleotidylyl transferase"/>
    <property type="match status" value="1"/>
</dbReference>
<dbReference type="PROSITE" id="PS00178">
    <property type="entry name" value="AA_TRNA_LIGASE_I"/>
    <property type="match status" value="1"/>
</dbReference>
<gene>
    <name evidence="1" type="primary">gltX</name>
    <name type="ordered locus">BH0109</name>
</gene>
<feature type="chain" id="PRO_0000119503" description="Glutamate--tRNA ligase">
    <location>
        <begin position="1"/>
        <end position="485"/>
    </location>
</feature>
<feature type="short sequence motif" description="'HIGH' region" evidence="1">
    <location>
        <begin position="11"/>
        <end position="21"/>
    </location>
</feature>
<feature type="short sequence motif" description="'KMSKS' region" evidence="1">
    <location>
        <begin position="252"/>
        <end position="256"/>
    </location>
</feature>
<feature type="binding site" evidence="1">
    <location>
        <position position="255"/>
    </location>
    <ligand>
        <name>ATP</name>
        <dbReference type="ChEBI" id="CHEBI:30616"/>
    </ligand>
</feature>
<accession>Q9KGF6</accession>
<reference key="1">
    <citation type="journal article" date="2000" name="Nucleic Acids Res.">
        <title>Complete genome sequence of the alkaliphilic bacterium Bacillus halodurans and genomic sequence comparison with Bacillus subtilis.</title>
        <authorList>
            <person name="Takami H."/>
            <person name="Nakasone K."/>
            <person name="Takaki Y."/>
            <person name="Maeno G."/>
            <person name="Sasaki R."/>
            <person name="Masui N."/>
            <person name="Fuji F."/>
            <person name="Hirama C."/>
            <person name="Nakamura Y."/>
            <person name="Ogasawara N."/>
            <person name="Kuhara S."/>
            <person name="Horikoshi K."/>
        </authorList>
    </citation>
    <scope>NUCLEOTIDE SEQUENCE [LARGE SCALE GENOMIC DNA]</scope>
    <source>
        <strain>ATCC BAA-125 / DSM 18197 / FERM 7344 / JCM 9153 / C-125</strain>
    </source>
</reference>
<evidence type="ECO:0000255" key="1">
    <source>
        <dbReference type="HAMAP-Rule" id="MF_00022"/>
    </source>
</evidence>
<organism>
    <name type="scientific">Halalkalibacterium halodurans (strain ATCC BAA-125 / DSM 18197 / FERM 7344 / JCM 9153 / C-125)</name>
    <name type="common">Bacillus halodurans</name>
    <dbReference type="NCBI Taxonomy" id="272558"/>
    <lineage>
        <taxon>Bacteria</taxon>
        <taxon>Bacillati</taxon>
        <taxon>Bacillota</taxon>
        <taxon>Bacilli</taxon>
        <taxon>Bacillales</taxon>
        <taxon>Bacillaceae</taxon>
        <taxon>Halalkalibacterium (ex Joshi et al. 2022)</taxon>
    </lineage>
</organism>